<protein>
    <recommendedName>
        <fullName>Brain acid soluble protein 1</fullName>
    </recommendedName>
    <alternativeName>
        <fullName>22 kDa neuronal tissue-enriched acidic protein</fullName>
    </alternativeName>
    <alternativeName>
        <fullName>Neuronal axonal membrane protein NAP-22</fullName>
    </alternativeName>
</protein>
<evidence type="ECO:0000250" key="1">
    <source>
        <dbReference type="UniProtKB" id="P80723"/>
    </source>
</evidence>
<evidence type="ECO:0000250" key="2">
    <source>
        <dbReference type="UniProtKB" id="P80724"/>
    </source>
</evidence>
<evidence type="ECO:0000250" key="3">
    <source>
        <dbReference type="UniProtKB" id="Q05175"/>
    </source>
</evidence>
<evidence type="ECO:0000256" key="4">
    <source>
        <dbReference type="SAM" id="MobiDB-lite"/>
    </source>
</evidence>
<evidence type="ECO:0000305" key="5"/>
<evidence type="ECO:0007744" key="6">
    <source>
    </source>
</evidence>
<evidence type="ECO:0007744" key="7">
    <source>
    </source>
</evidence>
<keyword id="KW-1003">Cell membrane</keyword>
<keyword id="KW-0966">Cell projection</keyword>
<keyword id="KW-0903">Direct protein sequencing</keyword>
<keyword id="KW-1017">Isopeptide bond</keyword>
<keyword id="KW-0449">Lipoprotein</keyword>
<keyword id="KW-0472">Membrane</keyword>
<keyword id="KW-0519">Myristate</keyword>
<keyword id="KW-0597">Phosphoprotein</keyword>
<keyword id="KW-1185">Reference proteome</keyword>
<keyword id="KW-0832">Ubl conjugation</keyword>
<proteinExistence type="evidence at protein level"/>
<dbReference type="EMBL" id="AB046714">
    <property type="protein sequence ID" value="BAB62404.1"/>
    <property type="molecule type" value="Genomic_DNA"/>
</dbReference>
<dbReference type="CCDS" id="CCDS27398.1"/>
<dbReference type="RefSeq" id="NP_081671.1">
    <property type="nucleotide sequence ID" value="NM_027395.2"/>
</dbReference>
<dbReference type="BioGRID" id="213993">
    <property type="interactions" value="25"/>
</dbReference>
<dbReference type="FunCoup" id="Q91XV3">
    <property type="interactions" value="145"/>
</dbReference>
<dbReference type="IntAct" id="Q91XV3">
    <property type="interactions" value="8"/>
</dbReference>
<dbReference type="MINT" id="Q91XV3"/>
<dbReference type="STRING" id="10090.ENSMUSP00000053943"/>
<dbReference type="GlyGen" id="Q91XV3">
    <property type="glycosylation" value="4 sites, 1 O-linked glycan (4 sites)"/>
</dbReference>
<dbReference type="iPTMnet" id="Q91XV3"/>
<dbReference type="PhosphoSitePlus" id="Q91XV3"/>
<dbReference type="SwissPalm" id="Q91XV3"/>
<dbReference type="jPOST" id="Q91XV3"/>
<dbReference type="PaxDb" id="10090-ENSMUSP00000053943"/>
<dbReference type="PeptideAtlas" id="Q91XV3"/>
<dbReference type="ProteomicsDB" id="273598"/>
<dbReference type="Pumba" id="Q91XV3"/>
<dbReference type="Antibodypedia" id="54132">
    <property type="antibodies" value="157 antibodies from 26 providers"/>
</dbReference>
<dbReference type="DNASU" id="70350"/>
<dbReference type="Ensembl" id="ENSMUST00000058845.9">
    <property type="protein sequence ID" value="ENSMUSP00000053943.8"/>
    <property type="gene ID" value="ENSMUSG00000045763.9"/>
</dbReference>
<dbReference type="GeneID" id="70350"/>
<dbReference type="KEGG" id="mmu:70350"/>
<dbReference type="UCSC" id="uc007vix.2">
    <property type="organism name" value="mouse"/>
</dbReference>
<dbReference type="AGR" id="MGI:1917600"/>
<dbReference type="CTD" id="10409"/>
<dbReference type="MGI" id="MGI:1917600">
    <property type="gene designation" value="Basp1"/>
</dbReference>
<dbReference type="VEuPathDB" id="HostDB:ENSMUSG00000045763"/>
<dbReference type="eggNOG" id="ENOG502RXJZ">
    <property type="taxonomic scope" value="Eukaryota"/>
</dbReference>
<dbReference type="GeneTree" id="ENSGT00730000111450"/>
<dbReference type="HOGENOM" id="CLU_093511_0_0_1"/>
<dbReference type="InParanoid" id="Q91XV3"/>
<dbReference type="OMA" id="EEFDHAE"/>
<dbReference type="Reactome" id="R-MMU-9035034">
    <property type="pathway name" value="RHOF GTPase cycle"/>
</dbReference>
<dbReference type="BioGRID-ORCS" id="70350">
    <property type="hits" value="2 hits in 79 CRISPR screens"/>
</dbReference>
<dbReference type="CD-CODE" id="CE726F99">
    <property type="entry name" value="Postsynaptic density"/>
</dbReference>
<dbReference type="ChiTaRS" id="Basp1">
    <property type="organism name" value="mouse"/>
</dbReference>
<dbReference type="PRO" id="PR:Q91XV3"/>
<dbReference type="Proteomes" id="UP000000589">
    <property type="component" value="Chromosome 15"/>
</dbReference>
<dbReference type="RNAct" id="Q91XV3">
    <property type="molecule type" value="protein"/>
</dbReference>
<dbReference type="Bgee" id="ENSMUSG00000045763">
    <property type="expression patterns" value="Expressed in perirhinal cortex and 256 other cell types or tissues"/>
</dbReference>
<dbReference type="ExpressionAtlas" id="Q91XV3">
    <property type="expression patterns" value="baseline and differential"/>
</dbReference>
<dbReference type="GO" id="GO:0030054">
    <property type="term" value="C:cell junction"/>
    <property type="evidence" value="ECO:0007669"/>
    <property type="project" value="Ensembl"/>
</dbReference>
<dbReference type="GO" id="GO:0000785">
    <property type="term" value="C:chromatin"/>
    <property type="evidence" value="ECO:0000314"/>
    <property type="project" value="UniProtKB"/>
</dbReference>
<dbReference type="GO" id="GO:0008180">
    <property type="term" value="C:COP9 signalosome"/>
    <property type="evidence" value="ECO:0007669"/>
    <property type="project" value="Ensembl"/>
</dbReference>
<dbReference type="GO" id="GO:0005737">
    <property type="term" value="C:cytoplasm"/>
    <property type="evidence" value="ECO:0000314"/>
    <property type="project" value="UniProtKB"/>
</dbReference>
<dbReference type="GO" id="GO:0030426">
    <property type="term" value="C:growth cone"/>
    <property type="evidence" value="ECO:0007669"/>
    <property type="project" value="UniProtKB-SubCell"/>
</dbReference>
<dbReference type="GO" id="GO:0016363">
    <property type="term" value="C:nuclear matrix"/>
    <property type="evidence" value="ECO:0007669"/>
    <property type="project" value="Ensembl"/>
</dbReference>
<dbReference type="GO" id="GO:0016607">
    <property type="term" value="C:nuclear speck"/>
    <property type="evidence" value="ECO:0000314"/>
    <property type="project" value="UniProtKB"/>
</dbReference>
<dbReference type="GO" id="GO:0005634">
    <property type="term" value="C:nucleus"/>
    <property type="evidence" value="ECO:0000314"/>
    <property type="project" value="UniProtKB"/>
</dbReference>
<dbReference type="GO" id="GO:0005886">
    <property type="term" value="C:plasma membrane"/>
    <property type="evidence" value="ECO:0007669"/>
    <property type="project" value="UniProtKB-SubCell"/>
</dbReference>
<dbReference type="GO" id="GO:0016605">
    <property type="term" value="C:PML body"/>
    <property type="evidence" value="ECO:0007669"/>
    <property type="project" value="Ensembl"/>
</dbReference>
<dbReference type="GO" id="GO:0005516">
    <property type="term" value="F:calmodulin binding"/>
    <property type="evidence" value="ECO:0007669"/>
    <property type="project" value="Ensembl"/>
</dbReference>
<dbReference type="GO" id="GO:0019904">
    <property type="term" value="F:protein domain specific binding"/>
    <property type="evidence" value="ECO:0007669"/>
    <property type="project" value="Ensembl"/>
</dbReference>
<dbReference type="GO" id="GO:0000976">
    <property type="term" value="F:transcription cis-regulatory region binding"/>
    <property type="evidence" value="ECO:0000314"/>
    <property type="project" value="UniProtKB"/>
</dbReference>
<dbReference type="GO" id="GO:0003714">
    <property type="term" value="F:transcription corepressor activity"/>
    <property type="evidence" value="ECO:0000250"/>
    <property type="project" value="UniProtKB"/>
</dbReference>
<dbReference type="GO" id="GO:0045892">
    <property type="term" value="P:negative regulation of DNA-templated transcription"/>
    <property type="evidence" value="ECO:0000250"/>
    <property type="project" value="UniProtKB"/>
</dbReference>
<dbReference type="GO" id="GO:0072112">
    <property type="term" value="P:podocyte differentiation"/>
    <property type="evidence" value="ECO:0000314"/>
    <property type="project" value="UniProtKB"/>
</dbReference>
<dbReference type="GO" id="GO:0051260">
    <property type="term" value="P:protein homooligomerization"/>
    <property type="evidence" value="ECO:0007669"/>
    <property type="project" value="Ensembl"/>
</dbReference>
<dbReference type="GO" id="GO:0097435">
    <property type="term" value="P:supramolecular fiber organization"/>
    <property type="evidence" value="ECO:0007669"/>
    <property type="project" value="Ensembl"/>
</dbReference>
<dbReference type="InterPro" id="IPR008408">
    <property type="entry name" value="BASP1"/>
</dbReference>
<dbReference type="PANTHER" id="PTHR23212">
    <property type="entry name" value="BRAIN ACID SOLUBLE PROTEIN 1"/>
    <property type="match status" value="1"/>
</dbReference>
<dbReference type="PANTHER" id="PTHR23212:SF0">
    <property type="entry name" value="BRAIN ACID SOLUBLE PROTEIN 1"/>
    <property type="match status" value="1"/>
</dbReference>
<dbReference type="Pfam" id="PF05466">
    <property type="entry name" value="BASP1"/>
    <property type="match status" value="1"/>
</dbReference>
<organism>
    <name type="scientific">Mus musculus</name>
    <name type="common">Mouse</name>
    <dbReference type="NCBI Taxonomy" id="10090"/>
    <lineage>
        <taxon>Eukaryota</taxon>
        <taxon>Metazoa</taxon>
        <taxon>Chordata</taxon>
        <taxon>Craniata</taxon>
        <taxon>Vertebrata</taxon>
        <taxon>Euteleostomi</taxon>
        <taxon>Mammalia</taxon>
        <taxon>Eutheria</taxon>
        <taxon>Euarchontoglires</taxon>
        <taxon>Glires</taxon>
        <taxon>Rodentia</taxon>
        <taxon>Myomorpha</taxon>
        <taxon>Muroidea</taxon>
        <taxon>Muridae</taxon>
        <taxon>Murinae</taxon>
        <taxon>Mus</taxon>
        <taxon>Mus</taxon>
    </lineage>
</organism>
<accession>Q91XV3</accession>
<gene>
    <name type="primary">Basp1</name>
    <name type="synonym">Nap22</name>
</gene>
<feature type="initiator methionine" description="Removed" evidence="2">
    <location>
        <position position="1"/>
    </location>
</feature>
<feature type="chain" id="PRO_0000142896" description="Brain acid soluble protein 1">
    <location>
        <begin position="2"/>
        <end position="226"/>
    </location>
</feature>
<feature type="region of interest" description="Disordered" evidence="4">
    <location>
        <begin position="1"/>
        <end position="226"/>
    </location>
</feature>
<feature type="compositionally biased region" description="Basic residues" evidence="4">
    <location>
        <begin position="1"/>
        <end position="11"/>
    </location>
</feature>
<feature type="compositionally biased region" description="Basic and acidic residues" evidence="4">
    <location>
        <begin position="15"/>
        <end position="27"/>
    </location>
</feature>
<feature type="compositionally biased region" description="Basic and acidic residues" evidence="4">
    <location>
        <begin position="49"/>
        <end position="94"/>
    </location>
</feature>
<feature type="compositionally biased region" description="Low complexity" evidence="4">
    <location>
        <begin position="106"/>
        <end position="140"/>
    </location>
</feature>
<feature type="compositionally biased region" description="Low complexity" evidence="4">
    <location>
        <begin position="150"/>
        <end position="226"/>
    </location>
</feature>
<feature type="modified residue" description="Phosphothreonine" evidence="7">
    <location>
        <position position="31"/>
    </location>
</feature>
<feature type="modified residue" description="Phosphothreonine" evidence="6 7">
    <location>
        <position position="36"/>
    </location>
</feature>
<feature type="modified residue" description="Phosphoserine" evidence="7">
    <location>
        <position position="40"/>
    </location>
</feature>
<feature type="modified residue" description="Phosphoserine" evidence="6 7">
    <location>
        <position position="92"/>
    </location>
</feature>
<feature type="modified residue" description="Phosphoserine" evidence="7">
    <location>
        <position position="128"/>
    </location>
</feature>
<feature type="modified residue" description="Phosphoserine" evidence="3">
    <location>
        <position position="131"/>
    </location>
</feature>
<feature type="modified residue" description="Phosphoserine" evidence="1">
    <location>
        <position position="160"/>
    </location>
</feature>
<feature type="modified residue" description="Phosphoserine" evidence="1">
    <location>
        <position position="167"/>
    </location>
</feature>
<feature type="modified residue" description="Phosphoserine" evidence="7">
    <location>
        <position position="169"/>
    </location>
</feature>
<feature type="modified residue" description="Phosphoserine" evidence="7">
    <location>
        <position position="173"/>
    </location>
</feature>
<feature type="modified residue" description="Phosphoserine" evidence="7">
    <location>
        <position position="192"/>
    </location>
</feature>
<feature type="modified residue" description="Phosphoserine" evidence="1">
    <location>
        <position position="218"/>
    </location>
</feature>
<feature type="lipid moiety-binding region" description="N-myristoyl glycine" evidence="1">
    <location>
        <position position="2"/>
    </location>
</feature>
<feature type="cross-link" description="Glycyl lysine isopeptide (Lys-Gly) (interchain with G-Cter in SUMO2)" evidence="1">
    <location>
        <position position="25"/>
    </location>
</feature>
<feature type="cross-link" description="Glycyl lysine isopeptide (Lys-Gly) (interchain with G-Cter in SUMO2)" evidence="1">
    <location>
        <position position="86"/>
    </location>
</feature>
<feature type="cross-link" description="Glycyl lysine isopeptide (Lys-Gly) (interchain with G-Cter in SUMO2)" evidence="1">
    <location>
        <position position="159"/>
    </location>
</feature>
<comment type="subcellular location">
    <subcellularLocation>
        <location>Cell membrane</location>
        <topology>Lipid-anchor</topology>
    </subcellularLocation>
    <subcellularLocation>
        <location>Cell projection</location>
        <location>Growth cone</location>
    </subcellularLocation>
    <text>Associated with the membranes of growth cones that form the tips of elongating axons.</text>
</comment>
<comment type="similarity">
    <text evidence="5">Belongs to the BASP1 family.</text>
</comment>
<reference key="1">
    <citation type="submission" date="2000-08" db="EMBL/GenBank/DDBJ databases">
        <title>Mouse NAP-22 (22 kDa neuronal tissue-enriched acidic protein) gene.</title>
        <authorList>
            <person name="Hamada K."/>
            <person name="Sokawa Y."/>
            <person name="Maekawa S."/>
        </authorList>
    </citation>
    <scope>NUCLEOTIDE SEQUENCE [GENOMIC DNA]</scope>
    <source>
        <strain>C57BL/6J X CBA/J</strain>
        <tissue>Spleen</tissue>
    </source>
</reference>
<reference key="2">
    <citation type="submission" date="2007-04" db="UniProtKB">
        <authorList>
            <person name="Lubec G."/>
            <person name="Klug S."/>
            <person name="Kang S.U."/>
        </authorList>
    </citation>
    <scope>PROTEIN SEQUENCE OF 26-52; 92-123 AND 147-225</scope>
    <scope>IDENTIFICATION BY MASS SPECTROMETRY</scope>
    <source>
        <strain>C57BL/6J</strain>
        <tissue>Brain</tissue>
        <tissue>Hippocampus</tissue>
    </source>
</reference>
<reference key="3">
    <citation type="journal article" date="2007" name="Mol. Cell. Proteomics">
        <title>Qualitative and quantitative analyses of protein phosphorylation in naive and stimulated mouse synaptosomal preparations.</title>
        <authorList>
            <person name="Munton R.P."/>
            <person name="Tweedie-Cullen R."/>
            <person name="Livingstone-Zatchej M."/>
            <person name="Weinandy F."/>
            <person name="Waidelich M."/>
            <person name="Longo D."/>
            <person name="Gehrig P."/>
            <person name="Potthast F."/>
            <person name="Rutishauser D."/>
            <person name="Gerrits B."/>
            <person name="Panse C."/>
            <person name="Schlapbach R."/>
            <person name="Mansuy I.M."/>
        </authorList>
    </citation>
    <scope>IDENTIFICATION BY MASS SPECTROMETRY [LARGE SCALE ANALYSIS]</scope>
    <source>
        <tissue>Brain cortex</tissue>
    </source>
</reference>
<reference key="4">
    <citation type="journal article" date="2009" name="Immunity">
        <title>The phagosomal proteome in interferon-gamma-activated macrophages.</title>
        <authorList>
            <person name="Trost M."/>
            <person name="English L."/>
            <person name="Lemieux S."/>
            <person name="Courcelles M."/>
            <person name="Desjardins M."/>
            <person name="Thibault P."/>
        </authorList>
    </citation>
    <scope>PHOSPHORYLATION [LARGE SCALE ANALYSIS] AT THR-36 AND SER-92</scope>
    <scope>IDENTIFICATION BY MASS SPECTROMETRY [LARGE SCALE ANALYSIS]</scope>
</reference>
<reference key="5">
    <citation type="journal article" date="2010" name="Cell">
        <title>A tissue-specific atlas of mouse protein phosphorylation and expression.</title>
        <authorList>
            <person name="Huttlin E.L."/>
            <person name="Jedrychowski M.P."/>
            <person name="Elias J.E."/>
            <person name="Goswami T."/>
            <person name="Rad R."/>
            <person name="Beausoleil S.A."/>
            <person name="Villen J."/>
            <person name="Haas W."/>
            <person name="Sowa M.E."/>
            <person name="Gygi S.P."/>
        </authorList>
    </citation>
    <scope>PHOSPHORYLATION [LARGE SCALE ANALYSIS] AT THR-31; THR-36; SER-40; SER-92; SER-128; SER-169; SER-173 AND SER-192</scope>
    <scope>IDENTIFICATION BY MASS SPECTROMETRY [LARGE SCALE ANALYSIS]</scope>
    <source>
        <tissue>Brain</tissue>
        <tissue>Brown adipose tissue</tissue>
        <tissue>Heart</tissue>
        <tissue>Kidney</tissue>
        <tissue>Lung</tissue>
        <tissue>Spleen</tissue>
        <tissue>Testis</tissue>
    </source>
</reference>
<sequence>MGGKLSKKKKGYNVNDEKAKDKDKKAEGAGTEEEGTPKESEPQAAADATEVKESTEEKPKDAADGEAKAEEKEADKAAAAKEEAPKAEPEKSEGAAEEQPEPAPAPEQEAAAPGPAAGGEAPKAGEASAESTGAADGAAPEEGEAKKTEAPAAAGPEAKSDAAPAASDSKPSSAEPAPSSKETPAASEAPSSAAKAPAPAAPAAAEPQAEAPAAAASSEQSVAVKE</sequence>
<name>BASP1_MOUSE</name>